<organismHost>
    <name type="scientific">Aves</name>
    <dbReference type="NCBI Taxonomy" id="8782"/>
</organismHost>
<organismHost>
    <name type="scientific">Homo sapiens</name>
    <name type="common">Human</name>
    <dbReference type="NCBI Taxonomy" id="9606"/>
</organismHost>
<organismHost>
    <name type="scientific">Sus scrofa</name>
    <name type="common">Pig</name>
    <dbReference type="NCBI Taxonomy" id="9823"/>
</organismHost>
<feature type="chain" id="PRO_0000079117" description="Nucleoprotein">
    <location>
        <begin position="1"/>
        <end position="498"/>
    </location>
</feature>
<feature type="region of interest" description="Disordered" evidence="2">
    <location>
        <begin position="1"/>
        <end position="22"/>
    </location>
</feature>
<feature type="short sequence motif" description="Unconventional nuclear localization signal" evidence="1">
    <location>
        <begin position="1"/>
        <end position="18"/>
    </location>
</feature>
<feature type="short sequence motif" description="Bipartite nuclear localization signal" evidence="1">
    <location>
        <begin position="198"/>
        <end position="216"/>
    </location>
</feature>
<feature type="compositionally biased region" description="Basic and acidic residues" evidence="2">
    <location>
        <begin position="8"/>
        <end position="21"/>
    </location>
</feature>
<comment type="function">
    <text evidence="1">Encapsidates the negative strand viral RNA, protecting it from nucleases. The encapsidated genomic RNA is termed the ribonucleoprotein (RNP) and serves as template for transcription and replication. The RNP needs to be localized in the host nucleus to start an infectious cycle, but is too large to diffuse through the nuclear pore complex. NP comprises at least 2 nuclear localization signals that are responsible for the active RNP import into the nucleus through cellular importin alpha/beta pathway. Later in the infection, nclear export of RNPs are mediated through viral proteins NEP interacting with M1 which binds nucleoproteins. It is possible that nucleoprotein binds directly host exportin-1/XPO1 and plays an active role in RNPs nuclear export. M1 interaction with RNP seems to hide nucleoprotein's nuclear localization signals. Soon after a virion infects a new cell, M1 dissociates from the RNP under acidification of the virion driven by M2 protein. Dissociation of M1 from RNP unmasks nucleoprotein's nuclear localization signals, targeting the RNP to the nucleus.</text>
</comment>
<comment type="subunit">
    <text evidence="1">Homomultimerizes to form the nucleocapsid. May bind host exportin-1/XPO1. Binds to viral genomic RNA. Protein-RNA contacts are mediated by a combination of electrostatic interactions between positively charged residues and the phosphate backbone and planar interactions between aromatic side chains and bases.</text>
</comment>
<comment type="subcellular location">
    <subcellularLocation>
        <location evidence="1">Virion</location>
    </subcellularLocation>
    <subcellularLocation>
        <location evidence="1">Host nucleus</location>
    </subcellularLocation>
</comment>
<comment type="PTM">
    <text evidence="1">Late in virus-infected cells, may be cleaved from a 56-kDa protein to a 53-kDa protein by a cellular caspase. This cleavage might be a marker for the onset of apoptosis in infected cells or have a specific function in virus host interaction.</text>
</comment>
<comment type="similarity">
    <text evidence="1">Belongs to the influenza viruses nucleoprotein family.</text>
</comment>
<sequence length="498" mass="56181">MATQGTKRSYEQMETDGERQNATEIRASVGKMISGIGRFYIQMCTELKLSDYEGRLIQNSLTIERMVLSAFDERRNKYLEEHPSAGKDPKKTGGPIYRRVDGKWMRELILYDKEEIRRIWRHANNGDDATAGLTHMMIWHSNLNDATYQRTRALVRTGMDPRMCSLMQGSTLPRRSGAAGAAVKGVGTMVMELIRMIKRGINDRNFWRGENGRRTRIAYERMCNILKGKFQTAAQRAMVDQVRESRNPGNAEVEDLIFLARSALILRGSVAHKSCLPACVYGPAVASGYDFEREGYSLVGIDPFRLLQNSQVYSLIRPNENPAHKSQLVWMACHSAAFEDLRVSSFIRGTKVVPRGKLSTRGVQIASNENMETMESSTLELRSRYWAIRTKSGGNTNQQRASAGQISIQPTFSVQRNLPFDRSTIMAAFTGNTEGRTSDMRTEIIRLMESARPEDVSFQGRGVFELSDEKAASPIVPSFDMSNEGSYFFGDNAEEYDN</sequence>
<reference key="1">
    <citation type="journal article" date="1991" name="J. Virol.">
        <title>Evolution of influenza A virus nucleoprotein genes: implications for the origins of H1N1 human and classical swine viruses.</title>
        <authorList>
            <person name="Gorman O.T."/>
            <person name="Bean W.J."/>
            <person name="Kawaoka Y."/>
            <person name="Donatelli I."/>
            <person name="Guo Y."/>
            <person name="Webster R.G."/>
        </authorList>
    </citation>
    <scope>NUCLEOTIDE SEQUENCE [GENOMIC RNA]</scope>
</reference>
<evidence type="ECO:0000255" key="1">
    <source>
        <dbReference type="HAMAP-Rule" id="MF_04070"/>
    </source>
</evidence>
<evidence type="ECO:0000256" key="2">
    <source>
        <dbReference type="SAM" id="MobiDB-lite"/>
    </source>
</evidence>
<dbReference type="EMBL" id="M63769">
    <property type="protein sequence ID" value="AAA52268.1"/>
    <property type="molecule type" value="Genomic_RNA"/>
</dbReference>
<dbReference type="SMR" id="P26089"/>
<dbReference type="GO" id="GO:0019029">
    <property type="term" value="C:helical viral capsid"/>
    <property type="evidence" value="ECO:0007669"/>
    <property type="project" value="UniProtKB-UniRule"/>
</dbReference>
<dbReference type="GO" id="GO:0043657">
    <property type="term" value="C:host cell"/>
    <property type="evidence" value="ECO:0007669"/>
    <property type="project" value="GOC"/>
</dbReference>
<dbReference type="GO" id="GO:0042025">
    <property type="term" value="C:host cell nucleus"/>
    <property type="evidence" value="ECO:0007669"/>
    <property type="project" value="UniProtKB-SubCell"/>
</dbReference>
<dbReference type="GO" id="GO:1990904">
    <property type="term" value="C:ribonucleoprotein complex"/>
    <property type="evidence" value="ECO:0007669"/>
    <property type="project" value="UniProtKB-KW"/>
</dbReference>
<dbReference type="GO" id="GO:0019013">
    <property type="term" value="C:viral nucleocapsid"/>
    <property type="evidence" value="ECO:0007669"/>
    <property type="project" value="UniProtKB-UniRule"/>
</dbReference>
<dbReference type="GO" id="GO:0003723">
    <property type="term" value="F:RNA binding"/>
    <property type="evidence" value="ECO:0007669"/>
    <property type="project" value="UniProtKB-UniRule"/>
</dbReference>
<dbReference type="GO" id="GO:0005198">
    <property type="term" value="F:structural molecule activity"/>
    <property type="evidence" value="ECO:0007669"/>
    <property type="project" value="UniProtKB-UniRule"/>
</dbReference>
<dbReference type="GO" id="GO:0046718">
    <property type="term" value="P:symbiont entry into host cell"/>
    <property type="evidence" value="ECO:0007669"/>
    <property type="project" value="UniProtKB-KW"/>
</dbReference>
<dbReference type="GO" id="GO:0075732">
    <property type="term" value="P:viral penetration into host nucleus"/>
    <property type="evidence" value="ECO:0007669"/>
    <property type="project" value="UniProtKB-UniRule"/>
</dbReference>
<dbReference type="HAMAP" id="MF_04070">
    <property type="entry name" value="INFV_NCAP"/>
    <property type="match status" value="1"/>
</dbReference>
<dbReference type="InterPro" id="IPR002141">
    <property type="entry name" value="Flu_NP"/>
</dbReference>
<dbReference type="Pfam" id="PF00506">
    <property type="entry name" value="Flu_NP"/>
    <property type="match status" value="1"/>
</dbReference>
<dbReference type="SUPFAM" id="SSF161003">
    <property type="entry name" value="flu NP-like"/>
    <property type="match status" value="1"/>
</dbReference>
<keyword id="KW-0167">Capsid protein</keyword>
<keyword id="KW-1139">Helical capsid protein</keyword>
<keyword id="KW-1048">Host nucleus</keyword>
<keyword id="KW-0945">Host-virus interaction</keyword>
<keyword id="KW-0687">Ribonucleoprotein</keyword>
<keyword id="KW-0694">RNA-binding</keyword>
<keyword id="KW-0543">Viral nucleoprotein</keyword>
<keyword id="KW-1163">Viral penetration into host nucleus</keyword>
<keyword id="KW-0946">Virion</keyword>
<keyword id="KW-1160">Virus entry into host cell</keyword>
<organism>
    <name type="scientific">Influenza A virus (strain A/Swine/Cambridge/1/1935 H1N1)</name>
    <dbReference type="NCBI Taxonomy" id="382844"/>
    <lineage>
        <taxon>Viruses</taxon>
        <taxon>Riboviria</taxon>
        <taxon>Orthornavirae</taxon>
        <taxon>Negarnaviricota</taxon>
        <taxon>Polyploviricotina</taxon>
        <taxon>Insthoviricetes</taxon>
        <taxon>Articulavirales</taxon>
        <taxon>Orthomyxoviridae</taxon>
        <taxon>Alphainfluenzavirus</taxon>
        <taxon>Alphainfluenzavirus influenzae</taxon>
        <taxon>Influenza A virus</taxon>
    </lineage>
</organism>
<protein>
    <recommendedName>
        <fullName evidence="1">Nucleoprotein</fullName>
    </recommendedName>
    <alternativeName>
        <fullName evidence="1">Nucleocapsid protein</fullName>
        <shortName evidence="1">Protein N</shortName>
    </alternativeName>
</protein>
<proteinExistence type="inferred from homology"/>
<accession>P26089</accession>
<name>NCAP_I35A1</name>
<gene>
    <name evidence="1" type="primary">NP</name>
</gene>